<sequence length="323" mass="36458">MVTILDRTKPDDKRIRHPEKAHKPDTEVLRKPEWIRVKAPTSKGYQETRELVRSHKLVTVCEEAGCPNIGECWEKKHATFMIMGEICTRACAFCNVATGKPNALDREEPANVAKAVRQMGLSHVVITSVDRDDLADGGAEHFEQVIWAIREASPATTIEILTPDFLKKPGALERVVAAKPDVFNHNMETVPGNYLTVRPGARYFHSVRLLQRVKELDPTMFTKSGIMVGLGEERNEVLQLMDDLRTADVDFLTIGQYLQPTRKHHKVERFVTPEEFKSYEDIAYTKGFLMVASSPLTRSSHHAGDDFARLKANREKKLLAAAE</sequence>
<gene>
    <name evidence="1" type="primary">lipA</name>
    <name type="ordered locus">Avi_2123</name>
</gene>
<organism>
    <name type="scientific">Allorhizobium ampelinum (strain ATCC BAA-846 / DSM 112012 / S4)</name>
    <name type="common">Agrobacterium vitis (strain S4)</name>
    <dbReference type="NCBI Taxonomy" id="311402"/>
    <lineage>
        <taxon>Bacteria</taxon>
        <taxon>Pseudomonadati</taxon>
        <taxon>Pseudomonadota</taxon>
        <taxon>Alphaproteobacteria</taxon>
        <taxon>Hyphomicrobiales</taxon>
        <taxon>Rhizobiaceae</taxon>
        <taxon>Rhizobium/Agrobacterium group</taxon>
        <taxon>Allorhizobium</taxon>
        <taxon>Allorhizobium ampelinum</taxon>
    </lineage>
</organism>
<comment type="function">
    <text evidence="1">Catalyzes the radical-mediated insertion of two sulfur atoms into the C-6 and C-8 positions of the octanoyl moiety bound to the lipoyl domains of lipoate-dependent enzymes, thereby converting the octanoylated domains into lipoylated derivatives.</text>
</comment>
<comment type="catalytic activity">
    <reaction evidence="1">
        <text>[[Fe-S] cluster scaffold protein carrying a second [4Fe-4S](2+) cluster] + N(6)-octanoyl-L-lysyl-[protein] + 2 oxidized [2Fe-2S]-[ferredoxin] + 2 S-adenosyl-L-methionine + 4 H(+) = [[Fe-S] cluster scaffold protein] + N(6)-[(R)-dihydrolipoyl]-L-lysyl-[protein] + 4 Fe(3+) + 2 hydrogen sulfide + 2 5'-deoxyadenosine + 2 L-methionine + 2 reduced [2Fe-2S]-[ferredoxin]</text>
        <dbReference type="Rhea" id="RHEA:16585"/>
        <dbReference type="Rhea" id="RHEA-COMP:9928"/>
        <dbReference type="Rhea" id="RHEA-COMP:10000"/>
        <dbReference type="Rhea" id="RHEA-COMP:10001"/>
        <dbReference type="Rhea" id="RHEA-COMP:10475"/>
        <dbReference type="Rhea" id="RHEA-COMP:14568"/>
        <dbReference type="Rhea" id="RHEA-COMP:14569"/>
        <dbReference type="ChEBI" id="CHEBI:15378"/>
        <dbReference type="ChEBI" id="CHEBI:17319"/>
        <dbReference type="ChEBI" id="CHEBI:29034"/>
        <dbReference type="ChEBI" id="CHEBI:29919"/>
        <dbReference type="ChEBI" id="CHEBI:33722"/>
        <dbReference type="ChEBI" id="CHEBI:33737"/>
        <dbReference type="ChEBI" id="CHEBI:33738"/>
        <dbReference type="ChEBI" id="CHEBI:57844"/>
        <dbReference type="ChEBI" id="CHEBI:59789"/>
        <dbReference type="ChEBI" id="CHEBI:78809"/>
        <dbReference type="ChEBI" id="CHEBI:83100"/>
        <dbReference type="EC" id="2.8.1.8"/>
    </reaction>
</comment>
<comment type="cofactor">
    <cofactor evidence="1">
        <name>[4Fe-4S] cluster</name>
        <dbReference type="ChEBI" id="CHEBI:49883"/>
    </cofactor>
    <text evidence="1">Binds 2 [4Fe-4S] clusters per subunit. One cluster is coordinated with 3 cysteines and an exchangeable S-adenosyl-L-methionine.</text>
</comment>
<comment type="pathway">
    <text evidence="1">Protein modification; protein lipoylation via endogenous pathway; protein N(6)-(lipoyl)lysine from octanoyl-[acyl-carrier-protein]: step 2/2.</text>
</comment>
<comment type="subcellular location">
    <subcellularLocation>
        <location evidence="1">Cytoplasm</location>
    </subcellularLocation>
</comment>
<comment type="similarity">
    <text evidence="1">Belongs to the radical SAM superfamily. Lipoyl synthase family.</text>
</comment>
<feature type="chain" id="PRO_1000124616" description="Lipoyl synthase">
    <location>
        <begin position="1"/>
        <end position="323"/>
    </location>
</feature>
<feature type="domain" description="Radical SAM core" evidence="2">
    <location>
        <begin position="73"/>
        <end position="289"/>
    </location>
</feature>
<feature type="region of interest" description="Disordered" evidence="3">
    <location>
        <begin position="1"/>
        <end position="25"/>
    </location>
</feature>
<feature type="compositionally biased region" description="Basic and acidic residues" evidence="3">
    <location>
        <begin position="1"/>
        <end position="14"/>
    </location>
</feature>
<feature type="binding site" evidence="1">
    <location>
        <position position="61"/>
    </location>
    <ligand>
        <name>[4Fe-4S] cluster</name>
        <dbReference type="ChEBI" id="CHEBI:49883"/>
        <label>1</label>
    </ligand>
</feature>
<feature type="binding site" evidence="1">
    <location>
        <position position="66"/>
    </location>
    <ligand>
        <name>[4Fe-4S] cluster</name>
        <dbReference type="ChEBI" id="CHEBI:49883"/>
        <label>1</label>
    </ligand>
</feature>
<feature type="binding site" evidence="1">
    <location>
        <position position="72"/>
    </location>
    <ligand>
        <name>[4Fe-4S] cluster</name>
        <dbReference type="ChEBI" id="CHEBI:49883"/>
        <label>1</label>
    </ligand>
</feature>
<feature type="binding site" evidence="1">
    <location>
        <position position="87"/>
    </location>
    <ligand>
        <name>[4Fe-4S] cluster</name>
        <dbReference type="ChEBI" id="CHEBI:49883"/>
        <label>2</label>
        <note>4Fe-4S-S-AdoMet</note>
    </ligand>
</feature>
<feature type="binding site" evidence="1">
    <location>
        <position position="91"/>
    </location>
    <ligand>
        <name>[4Fe-4S] cluster</name>
        <dbReference type="ChEBI" id="CHEBI:49883"/>
        <label>2</label>
        <note>4Fe-4S-S-AdoMet</note>
    </ligand>
</feature>
<feature type="binding site" evidence="1">
    <location>
        <position position="94"/>
    </location>
    <ligand>
        <name>[4Fe-4S] cluster</name>
        <dbReference type="ChEBI" id="CHEBI:49883"/>
        <label>2</label>
        <note>4Fe-4S-S-AdoMet</note>
    </ligand>
</feature>
<feature type="binding site" evidence="1">
    <location>
        <position position="300"/>
    </location>
    <ligand>
        <name>[4Fe-4S] cluster</name>
        <dbReference type="ChEBI" id="CHEBI:49883"/>
        <label>1</label>
    </ligand>
</feature>
<name>LIPA_ALLAM</name>
<keyword id="KW-0004">4Fe-4S</keyword>
<keyword id="KW-0963">Cytoplasm</keyword>
<keyword id="KW-0408">Iron</keyword>
<keyword id="KW-0411">Iron-sulfur</keyword>
<keyword id="KW-0479">Metal-binding</keyword>
<keyword id="KW-1185">Reference proteome</keyword>
<keyword id="KW-0949">S-adenosyl-L-methionine</keyword>
<keyword id="KW-0808">Transferase</keyword>
<dbReference type="EC" id="2.8.1.8" evidence="1"/>
<dbReference type="EMBL" id="CP000633">
    <property type="protein sequence ID" value="ACM36512.1"/>
    <property type="molecule type" value="Genomic_DNA"/>
</dbReference>
<dbReference type="RefSeq" id="WP_015915933.1">
    <property type="nucleotide sequence ID" value="NC_011989.1"/>
</dbReference>
<dbReference type="SMR" id="B9JW84"/>
<dbReference type="STRING" id="311402.Avi_2123"/>
<dbReference type="KEGG" id="avi:Avi_2123"/>
<dbReference type="eggNOG" id="COG0320">
    <property type="taxonomic scope" value="Bacteria"/>
</dbReference>
<dbReference type="HOGENOM" id="CLU_033144_2_1_5"/>
<dbReference type="UniPathway" id="UPA00538">
    <property type="reaction ID" value="UER00593"/>
</dbReference>
<dbReference type="Proteomes" id="UP000001596">
    <property type="component" value="Chromosome 1"/>
</dbReference>
<dbReference type="GO" id="GO:0005737">
    <property type="term" value="C:cytoplasm"/>
    <property type="evidence" value="ECO:0007669"/>
    <property type="project" value="UniProtKB-SubCell"/>
</dbReference>
<dbReference type="GO" id="GO:0051539">
    <property type="term" value="F:4 iron, 4 sulfur cluster binding"/>
    <property type="evidence" value="ECO:0007669"/>
    <property type="project" value="UniProtKB-UniRule"/>
</dbReference>
<dbReference type="GO" id="GO:0016992">
    <property type="term" value="F:lipoate synthase activity"/>
    <property type="evidence" value="ECO:0007669"/>
    <property type="project" value="UniProtKB-UniRule"/>
</dbReference>
<dbReference type="GO" id="GO:0046872">
    <property type="term" value="F:metal ion binding"/>
    <property type="evidence" value="ECO:0007669"/>
    <property type="project" value="UniProtKB-KW"/>
</dbReference>
<dbReference type="CDD" id="cd01335">
    <property type="entry name" value="Radical_SAM"/>
    <property type="match status" value="1"/>
</dbReference>
<dbReference type="FunFam" id="3.20.20.70:FF:000186">
    <property type="entry name" value="Lipoyl synthase"/>
    <property type="match status" value="1"/>
</dbReference>
<dbReference type="Gene3D" id="3.20.20.70">
    <property type="entry name" value="Aldolase class I"/>
    <property type="match status" value="1"/>
</dbReference>
<dbReference type="HAMAP" id="MF_00206">
    <property type="entry name" value="Lipoyl_synth"/>
    <property type="match status" value="1"/>
</dbReference>
<dbReference type="InterPro" id="IPR013785">
    <property type="entry name" value="Aldolase_TIM"/>
</dbReference>
<dbReference type="InterPro" id="IPR006638">
    <property type="entry name" value="Elp3/MiaA/NifB-like_rSAM"/>
</dbReference>
<dbReference type="InterPro" id="IPR031691">
    <property type="entry name" value="LIAS_N"/>
</dbReference>
<dbReference type="InterPro" id="IPR003698">
    <property type="entry name" value="Lipoyl_synth"/>
</dbReference>
<dbReference type="InterPro" id="IPR007197">
    <property type="entry name" value="rSAM"/>
</dbReference>
<dbReference type="NCBIfam" id="TIGR00510">
    <property type="entry name" value="lipA"/>
    <property type="match status" value="1"/>
</dbReference>
<dbReference type="NCBIfam" id="NF004019">
    <property type="entry name" value="PRK05481.1"/>
    <property type="match status" value="1"/>
</dbReference>
<dbReference type="NCBIfam" id="NF009544">
    <property type="entry name" value="PRK12928.1"/>
    <property type="match status" value="1"/>
</dbReference>
<dbReference type="PANTHER" id="PTHR10949">
    <property type="entry name" value="LIPOYL SYNTHASE"/>
    <property type="match status" value="1"/>
</dbReference>
<dbReference type="PANTHER" id="PTHR10949:SF0">
    <property type="entry name" value="LIPOYL SYNTHASE, MITOCHONDRIAL"/>
    <property type="match status" value="1"/>
</dbReference>
<dbReference type="Pfam" id="PF16881">
    <property type="entry name" value="LIAS_N"/>
    <property type="match status" value="1"/>
</dbReference>
<dbReference type="Pfam" id="PF04055">
    <property type="entry name" value="Radical_SAM"/>
    <property type="match status" value="1"/>
</dbReference>
<dbReference type="PIRSF" id="PIRSF005963">
    <property type="entry name" value="Lipoyl_synth"/>
    <property type="match status" value="1"/>
</dbReference>
<dbReference type="SFLD" id="SFLDF00271">
    <property type="entry name" value="lipoyl_synthase"/>
    <property type="match status" value="1"/>
</dbReference>
<dbReference type="SFLD" id="SFLDS00029">
    <property type="entry name" value="Radical_SAM"/>
    <property type="match status" value="1"/>
</dbReference>
<dbReference type="SMART" id="SM00729">
    <property type="entry name" value="Elp3"/>
    <property type="match status" value="1"/>
</dbReference>
<dbReference type="SUPFAM" id="SSF102114">
    <property type="entry name" value="Radical SAM enzymes"/>
    <property type="match status" value="1"/>
</dbReference>
<dbReference type="PROSITE" id="PS51918">
    <property type="entry name" value="RADICAL_SAM"/>
    <property type="match status" value="1"/>
</dbReference>
<evidence type="ECO:0000255" key="1">
    <source>
        <dbReference type="HAMAP-Rule" id="MF_00206"/>
    </source>
</evidence>
<evidence type="ECO:0000255" key="2">
    <source>
        <dbReference type="PROSITE-ProRule" id="PRU01266"/>
    </source>
</evidence>
<evidence type="ECO:0000256" key="3">
    <source>
        <dbReference type="SAM" id="MobiDB-lite"/>
    </source>
</evidence>
<protein>
    <recommendedName>
        <fullName evidence="1">Lipoyl synthase</fullName>
        <ecNumber evidence="1">2.8.1.8</ecNumber>
    </recommendedName>
    <alternativeName>
        <fullName evidence="1">Lip-syn</fullName>
        <shortName evidence="1">LS</shortName>
    </alternativeName>
    <alternativeName>
        <fullName evidence="1">Lipoate synthase</fullName>
    </alternativeName>
    <alternativeName>
        <fullName evidence="1">Lipoic acid synthase</fullName>
    </alternativeName>
    <alternativeName>
        <fullName evidence="1">Sulfur insertion protein LipA</fullName>
    </alternativeName>
</protein>
<reference key="1">
    <citation type="journal article" date="2009" name="J. Bacteriol.">
        <title>Genome sequences of three Agrobacterium biovars help elucidate the evolution of multichromosome genomes in bacteria.</title>
        <authorList>
            <person name="Slater S.C."/>
            <person name="Goldman B.S."/>
            <person name="Goodner B."/>
            <person name="Setubal J.C."/>
            <person name="Farrand S.K."/>
            <person name="Nester E.W."/>
            <person name="Burr T.J."/>
            <person name="Banta L."/>
            <person name="Dickerman A.W."/>
            <person name="Paulsen I."/>
            <person name="Otten L."/>
            <person name="Suen G."/>
            <person name="Welch R."/>
            <person name="Almeida N.F."/>
            <person name="Arnold F."/>
            <person name="Burton O.T."/>
            <person name="Du Z."/>
            <person name="Ewing A."/>
            <person name="Godsy E."/>
            <person name="Heisel S."/>
            <person name="Houmiel K.L."/>
            <person name="Jhaveri J."/>
            <person name="Lu J."/>
            <person name="Miller N.M."/>
            <person name="Norton S."/>
            <person name="Chen Q."/>
            <person name="Phoolcharoen W."/>
            <person name="Ohlin V."/>
            <person name="Ondrusek D."/>
            <person name="Pride N."/>
            <person name="Stricklin S.L."/>
            <person name="Sun J."/>
            <person name="Wheeler C."/>
            <person name="Wilson L."/>
            <person name="Zhu H."/>
            <person name="Wood D.W."/>
        </authorList>
    </citation>
    <scope>NUCLEOTIDE SEQUENCE [LARGE SCALE GENOMIC DNA]</scope>
    <source>
        <strain>ATCC BAA-846 / DSM 112012 / S4</strain>
    </source>
</reference>
<accession>B9JW84</accession>
<proteinExistence type="inferred from homology"/>